<organism>
    <name type="scientific">Acanthamoeba polyphaga mimivirus</name>
    <name type="common">APMV</name>
    <dbReference type="NCBI Taxonomy" id="212035"/>
    <lineage>
        <taxon>Viruses</taxon>
        <taxon>Varidnaviria</taxon>
        <taxon>Bamfordvirae</taxon>
        <taxon>Nucleocytoviricota</taxon>
        <taxon>Megaviricetes</taxon>
        <taxon>Imitervirales</taxon>
        <taxon>Mimiviridae</taxon>
        <taxon>Megamimivirinae</taxon>
        <taxon>Mimivirus</taxon>
        <taxon>Mimivirus bradfordmassiliense</taxon>
    </lineage>
</organism>
<gene>
    <name type="ordered locus">MIMI_R896</name>
</gene>
<proteinExistence type="predicted"/>
<feature type="chain" id="PRO_0000067224" description="Putative ankyrin repeat protein R896">
    <location>
        <begin position="1"/>
        <end position="332"/>
    </location>
</feature>
<feature type="repeat" description="ANK 1">
    <location>
        <begin position="159"/>
        <end position="188"/>
    </location>
</feature>
<feature type="repeat" description="ANK 2">
    <location>
        <begin position="190"/>
        <end position="218"/>
    </location>
</feature>
<feature type="repeat" description="ANK 3">
    <location>
        <begin position="219"/>
        <end position="248"/>
    </location>
</feature>
<feature type="repeat" description="ANK 4">
    <location>
        <begin position="249"/>
        <end position="278"/>
    </location>
</feature>
<feature type="repeat" description="ANK 5">
    <location>
        <begin position="280"/>
        <end position="308"/>
    </location>
</feature>
<keyword id="KW-0040">ANK repeat</keyword>
<keyword id="KW-1185">Reference proteome</keyword>
<keyword id="KW-0677">Repeat</keyword>
<name>YR896_MIMIV</name>
<protein>
    <recommendedName>
        <fullName>Putative ankyrin repeat protein R896</fullName>
    </recommendedName>
</protein>
<reference key="1">
    <citation type="journal article" date="2004" name="Science">
        <title>The 1.2-megabase genome sequence of Mimivirus.</title>
        <authorList>
            <person name="Raoult D."/>
            <person name="Audic S."/>
            <person name="Robert C."/>
            <person name="Abergel C."/>
            <person name="Renesto P."/>
            <person name="Ogata H."/>
            <person name="La Scola B."/>
            <person name="Susan M."/>
            <person name="Claverie J.-M."/>
        </authorList>
    </citation>
    <scope>NUCLEOTIDE SEQUENCE [LARGE SCALE GENOMIC DNA]</scope>
    <source>
        <strain>Rowbotham-Bradford</strain>
    </source>
</reference>
<dbReference type="EMBL" id="AY653733">
    <property type="protein sequence ID" value="AAV51153.1"/>
    <property type="molecule type" value="Genomic_DNA"/>
</dbReference>
<dbReference type="SMR" id="Q5UQY9"/>
<dbReference type="KEGG" id="vg:9925565"/>
<dbReference type="OrthoDB" id="29694at10239"/>
<dbReference type="Proteomes" id="UP000001134">
    <property type="component" value="Genome"/>
</dbReference>
<dbReference type="Gene3D" id="1.25.40.20">
    <property type="entry name" value="Ankyrin repeat-containing domain"/>
    <property type="match status" value="2"/>
</dbReference>
<dbReference type="InterPro" id="IPR002110">
    <property type="entry name" value="Ankyrin_rpt"/>
</dbReference>
<dbReference type="InterPro" id="IPR036770">
    <property type="entry name" value="Ankyrin_rpt-contain_sf"/>
</dbReference>
<dbReference type="PANTHER" id="PTHR24188">
    <property type="entry name" value="ANKYRIN REPEAT PROTEIN"/>
    <property type="match status" value="1"/>
</dbReference>
<dbReference type="PANTHER" id="PTHR24188:SF29">
    <property type="entry name" value="GH09064P"/>
    <property type="match status" value="1"/>
</dbReference>
<dbReference type="Pfam" id="PF00023">
    <property type="entry name" value="Ank"/>
    <property type="match status" value="1"/>
</dbReference>
<dbReference type="Pfam" id="PF12796">
    <property type="entry name" value="Ank_2"/>
    <property type="match status" value="1"/>
</dbReference>
<dbReference type="SMART" id="SM00248">
    <property type="entry name" value="ANK"/>
    <property type="match status" value="5"/>
</dbReference>
<dbReference type="SUPFAM" id="SSF48403">
    <property type="entry name" value="Ankyrin repeat"/>
    <property type="match status" value="1"/>
</dbReference>
<dbReference type="PROSITE" id="PS50297">
    <property type="entry name" value="ANK_REP_REGION"/>
    <property type="match status" value="1"/>
</dbReference>
<dbReference type="PROSITE" id="PS50088">
    <property type="entry name" value="ANK_REPEAT"/>
    <property type="match status" value="4"/>
</dbReference>
<accession>Q5UQY9</accession>
<sequence>MVTLNIYSIIKMKRFPKRNYLRKTKVSFFNRSQRHFSQHLNIDIIGPLFKITRKDEKHYNFQYNDGLNILDTPFNNDDDHCTPGKLYFSDSKNICKYLGFGDNLRKISLPIDNPDFKMTKCLYGEKYGANMLIFGEKFDLDKVETYQKMILMDIDIRAGNDNAMIIAAQKGNLEIVKFLVESGANVKSQDNCAVRLASEFGHLDVVEYLYKSGANVKADGNYAITWACKNGHLPVIEFLTSVGADIKAAQNLPIKMAAIGGHLNVIKYLVDRGANISTDNDYVFNIACRNGHTDLAEYAVSLGADIFSDGCYGIDHAIRYNHYKIVDKFIGT</sequence>
<organismHost>
    <name type="scientific">Acanthamoeba polyphaga</name>
    <name type="common">Amoeba</name>
    <dbReference type="NCBI Taxonomy" id="5757"/>
</organismHost>